<reference key="1">
    <citation type="journal article" date="2003" name="Mol. Biol. Cell">
        <title>SVIP is a novel VCP/p97-interacting protein whose expression causes cell vacuolation.</title>
        <authorList>
            <person name="Nagahama M."/>
            <person name="Suzuki M."/>
            <person name="Hamada Y."/>
            <person name="Hatsuzawa K."/>
            <person name="Tani K."/>
            <person name="Yamamoto A."/>
            <person name="Tagaya M."/>
        </authorList>
    </citation>
    <scope>NUCLEOTIDE SEQUENCE [MRNA]</scope>
    <scope>INTERACTION WITH VCP</scope>
    <scope>SUBCELLULAR LOCATION</scope>
    <scope>TISSUE SPECIFICITY</scope>
    <source>
        <tissue>Brain</tissue>
    </source>
</reference>
<reference key="2">
    <citation type="journal article" date="2022" name="Sci. Rep.">
        <title>Novel regulation mechanism of adrenal cortisol and DHEA biosynthesis via the endogen ERAD inhibitor small VCP-interacting protein.</title>
        <authorList>
            <person name="Ilhan R."/>
            <person name="Uener G."/>
            <person name="Yilmaz S."/>
            <person name="Atalay Sahar E."/>
            <person name="Cayli S."/>
            <person name="Erzurumlu Y."/>
            <person name="Gozen O."/>
            <person name="Ballar Kirmizibayrak P."/>
        </authorList>
    </citation>
    <scope>TISSUE SPECIFICITY</scope>
</reference>
<protein>
    <recommendedName>
        <fullName>Small VCP/p97-interacting protein</fullName>
    </recommendedName>
</protein>
<accession>P0C0A9</accession>
<gene>
    <name type="primary">Svip</name>
</gene>
<keyword id="KW-1003">Cell membrane</keyword>
<keyword id="KW-0256">Endoplasmic reticulum</keyword>
<keyword id="KW-0333">Golgi apparatus</keyword>
<keyword id="KW-0449">Lipoprotein</keyword>
<keyword id="KW-0458">Lysosome</keyword>
<keyword id="KW-0472">Membrane</keyword>
<keyword id="KW-0519">Myristate</keyword>
<keyword id="KW-0564">Palmitate</keyword>
<keyword id="KW-0597">Phosphoprotein</keyword>
<keyword id="KW-1185">Reference proteome</keyword>
<comment type="function">
    <text evidence="1">Negative regulator of the ER-associated degradation pathway (ERAD) of misfolded proteins. It competes with AMFR/gp78 for binding VCP/p97, and inhibits AMFR/gp78-VCP/p97 complex formation that is required for degradation of ERAD substrates. Involved in the regulation of adrenal cortisol and dehydroepiandrosterone (DHEA) biosynthesis.</text>
</comment>
<comment type="subunit">
    <text evidence="1 3">Interacts with VCP. Forms a complex with VCP/p97 and DERL1 (By similarity).</text>
</comment>
<comment type="subcellular location">
    <subcellularLocation>
        <location evidence="1">Membrane</location>
        <topology evidence="1">Lipid-anchor</topology>
    </subcellularLocation>
    <subcellularLocation>
        <location evidence="3">Smooth endoplasmic reticulum membrane</location>
        <topology evidence="3">Peripheral membrane protein</topology>
    </subcellularLocation>
    <subcellularLocation>
        <location evidence="3">Golgi apparatus membrane</location>
        <topology evidence="3">Peripheral membrane protein</topology>
    </subcellularLocation>
    <subcellularLocation>
        <location evidence="3">Cell membrane</location>
        <topology evidence="3">Peripheral membrane protein</topology>
    </subcellularLocation>
    <subcellularLocation>
        <location evidence="1">Lysosome membrane</location>
    </subcellularLocation>
</comment>
<comment type="tissue specificity">
    <text evidence="3 4">Ubiquitous (PubMed:12529442). In the adrenal gland, it is expressed in the cortex at all developmental stages (PubMed:35042898).</text>
</comment>
<comment type="similarity">
    <text evidence="5">Belongs to the SVIP family.</text>
</comment>
<evidence type="ECO:0000250" key="1">
    <source>
        <dbReference type="UniProtKB" id="Q8NHG7"/>
    </source>
</evidence>
<evidence type="ECO:0000256" key="2">
    <source>
        <dbReference type="SAM" id="MobiDB-lite"/>
    </source>
</evidence>
<evidence type="ECO:0000269" key="3">
    <source>
    </source>
</evidence>
<evidence type="ECO:0000269" key="4">
    <source>
    </source>
</evidence>
<evidence type="ECO:0000305" key="5"/>
<feature type="initiator methionine" description="Removed" evidence="1">
    <location>
        <position position="1"/>
    </location>
</feature>
<feature type="chain" id="PRO_0000072339" description="Small VCP/p97-interacting protein">
    <location>
        <begin position="2"/>
        <end position="76"/>
    </location>
</feature>
<feature type="region of interest" description="Disordered" evidence="2">
    <location>
        <begin position="1"/>
        <end position="76"/>
    </location>
</feature>
<feature type="region of interest" description="VCP/p97-interacting motif (VIM)" evidence="1">
    <location>
        <begin position="21"/>
        <end position="33"/>
    </location>
</feature>
<feature type="compositionally biased region" description="Basic and acidic residues" evidence="2">
    <location>
        <begin position="18"/>
        <end position="37"/>
    </location>
</feature>
<feature type="modified residue" description="Phosphoserine" evidence="1">
    <location>
        <position position="46"/>
    </location>
</feature>
<feature type="lipid moiety-binding region" description="N-myristoyl glycine" evidence="1">
    <location>
        <position position="2"/>
    </location>
</feature>
<feature type="lipid moiety-binding region" description="S-palmitoyl cysteine" evidence="1">
    <location>
        <position position="4"/>
    </location>
</feature>
<feature type="lipid moiety-binding region" description="S-palmitoyl cysteine" evidence="1">
    <location>
        <position position="7"/>
    </location>
</feature>
<dbReference type="RefSeq" id="NP_001258013.1">
    <property type="nucleotide sequence ID" value="NM_001271084.1"/>
</dbReference>
<dbReference type="SMR" id="P0C0A9"/>
<dbReference type="FunCoup" id="P0C0A9">
    <property type="interactions" value="618"/>
</dbReference>
<dbReference type="STRING" id="10116.ENSRNOP00000052878"/>
<dbReference type="PhosphoSitePlus" id="P0C0A9"/>
<dbReference type="PaxDb" id="10116-ENSRNOP00000052878"/>
<dbReference type="GeneID" id="499157"/>
<dbReference type="KEGG" id="rno:499157"/>
<dbReference type="UCSC" id="RGD:1565432">
    <property type="organism name" value="rat"/>
</dbReference>
<dbReference type="AGR" id="RGD:1565432"/>
<dbReference type="CTD" id="258010"/>
<dbReference type="RGD" id="1565432">
    <property type="gene designation" value="Svip"/>
</dbReference>
<dbReference type="VEuPathDB" id="HostDB:ENSRNOG00000037137"/>
<dbReference type="eggNOG" id="ENOG502S5MU">
    <property type="taxonomic scope" value="Eukaryota"/>
</dbReference>
<dbReference type="HOGENOM" id="CLU_174267_1_0_1"/>
<dbReference type="InParanoid" id="P0C0A9"/>
<dbReference type="PhylomeDB" id="P0C0A9"/>
<dbReference type="Reactome" id="R-RNO-6798695">
    <property type="pathway name" value="Neutrophil degranulation"/>
</dbReference>
<dbReference type="PRO" id="PR:P0C0A9"/>
<dbReference type="Proteomes" id="UP000002494">
    <property type="component" value="Chromosome 1"/>
</dbReference>
<dbReference type="Bgee" id="ENSRNOG00000037137">
    <property type="expression patterns" value="Expressed in pancreas and 20 other cell types or tissues"/>
</dbReference>
<dbReference type="GO" id="GO:0005789">
    <property type="term" value="C:endoplasmic reticulum membrane"/>
    <property type="evidence" value="ECO:0000266"/>
    <property type="project" value="RGD"/>
</dbReference>
<dbReference type="GO" id="GO:0000139">
    <property type="term" value="C:Golgi membrane"/>
    <property type="evidence" value="ECO:0007669"/>
    <property type="project" value="UniProtKB-SubCell"/>
</dbReference>
<dbReference type="GO" id="GO:0005765">
    <property type="term" value="C:lysosomal membrane"/>
    <property type="evidence" value="ECO:0007669"/>
    <property type="project" value="UniProtKB-SubCell"/>
</dbReference>
<dbReference type="GO" id="GO:0016020">
    <property type="term" value="C:membrane"/>
    <property type="evidence" value="ECO:0000266"/>
    <property type="project" value="RGD"/>
</dbReference>
<dbReference type="GO" id="GO:0005886">
    <property type="term" value="C:plasma membrane"/>
    <property type="evidence" value="ECO:0007669"/>
    <property type="project" value="UniProtKB-SubCell"/>
</dbReference>
<dbReference type="GO" id="GO:0030868">
    <property type="term" value="C:smooth endoplasmic reticulum membrane"/>
    <property type="evidence" value="ECO:0007669"/>
    <property type="project" value="UniProtKB-SubCell"/>
</dbReference>
<dbReference type="GO" id="GO:0051117">
    <property type="term" value="F:ATPase binding"/>
    <property type="evidence" value="ECO:0000266"/>
    <property type="project" value="RGD"/>
</dbReference>
<dbReference type="GO" id="GO:1904293">
    <property type="term" value="P:negative regulation of ERAD pathway"/>
    <property type="evidence" value="ECO:0000314"/>
    <property type="project" value="ParkinsonsUK-UCL"/>
</dbReference>
<dbReference type="GO" id="GO:0031333">
    <property type="term" value="P:negative regulation of protein-containing complex assembly"/>
    <property type="evidence" value="ECO:0000266"/>
    <property type="project" value="RGD"/>
</dbReference>
<dbReference type="GO" id="GO:1904153">
    <property type="term" value="P:negative regulation of retrograde protein transport, ER to cytosol"/>
    <property type="evidence" value="ECO:0000266"/>
    <property type="project" value="RGD"/>
</dbReference>
<dbReference type="GO" id="GO:2000059">
    <property type="term" value="P:negative regulation of ubiquitin-dependent protein catabolic process"/>
    <property type="evidence" value="ECO:0000314"/>
    <property type="project" value="ParkinsonsUK-UCL"/>
</dbReference>
<dbReference type="GO" id="GO:1904240">
    <property type="term" value="P:negative regulation of VCP-NPL4-UFD1 AAA ATPase complex assembly"/>
    <property type="evidence" value="ECO:0000314"/>
    <property type="project" value="ParkinsonsUK-UCL"/>
</dbReference>
<dbReference type="GO" id="GO:0010508">
    <property type="term" value="P:positive regulation of autophagy"/>
    <property type="evidence" value="ECO:0000266"/>
    <property type="project" value="RGD"/>
</dbReference>
<dbReference type="InterPro" id="IPR031632">
    <property type="entry name" value="SVIP"/>
</dbReference>
<dbReference type="InterPro" id="IPR055366">
    <property type="entry name" value="SVIP_metazoa"/>
</dbReference>
<dbReference type="PANTHER" id="PTHR35269">
    <property type="entry name" value="SMALL VCP/P97-INTERACTING PROTEIN"/>
    <property type="match status" value="1"/>
</dbReference>
<dbReference type="PANTHER" id="PTHR35269:SF1">
    <property type="entry name" value="SMALL VCP_P97-INTERACTING PROTEIN"/>
    <property type="match status" value="1"/>
</dbReference>
<dbReference type="Pfam" id="PF15811">
    <property type="entry name" value="SVIP"/>
    <property type="match status" value="1"/>
</dbReference>
<proteinExistence type="evidence at protein level"/>
<organism>
    <name type="scientific">Rattus norvegicus</name>
    <name type="common">Rat</name>
    <dbReference type="NCBI Taxonomy" id="10116"/>
    <lineage>
        <taxon>Eukaryota</taxon>
        <taxon>Metazoa</taxon>
        <taxon>Chordata</taxon>
        <taxon>Craniata</taxon>
        <taxon>Vertebrata</taxon>
        <taxon>Euteleostomi</taxon>
        <taxon>Mammalia</taxon>
        <taxon>Eutheria</taxon>
        <taxon>Euarchontoglires</taxon>
        <taxon>Glires</taxon>
        <taxon>Rodentia</taxon>
        <taxon>Myomorpha</taxon>
        <taxon>Muroidea</taxon>
        <taxon>Muridae</taxon>
        <taxon>Murinae</taxon>
        <taxon>Rattus</taxon>
    </lineage>
</organism>
<sequence>MGLCFPCPAESAPPSPSPEEKRAKLAEAAERRQKEAASRGILDIQSVEAKKKKKEQLEKQMETSGPPAGGLRWTVS</sequence>
<name>SVIP_RAT</name>